<dbReference type="EC" id="2.1.1.45" evidence="1"/>
<dbReference type="EMBL" id="U86637">
    <property type="protein sequence ID" value="AAC45469.1"/>
    <property type="status" value="ALT_INIT"/>
    <property type="molecule type" value="Genomic_DNA"/>
</dbReference>
<dbReference type="SMR" id="O33380"/>
<dbReference type="UniPathway" id="UPA00575"/>
<dbReference type="GO" id="GO:0005829">
    <property type="term" value="C:cytosol"/>
    <property type="evidence" value="ECO:0007669"/>
    <property type="project" value="TreeGrafter"/>
</dbReference>
<dbReference type="GO" id="GO:0004799">
    <property type="term" value="F:thymidylate synthase activity"/>
    <property type="evidence" value="ECO:0007669"/>
    <property type="project" value="UniProtKB-UniRule"/>
</dbReference>
<dbReference type="GO" id="GO:0006231">
    <property type="term" value="P:dTMP biosynthetic process"/>
    <property type="evidence" value="ECO:0007669"/>
    <property type="project" value="UniProtKB-UniRule"/>
</dbReference>
<dbReference type="GO" id="GO:0006235">
    <property type="term" value="P:dTTP biosynthetic process"/>
    <property type="evidence" value="ECO:0007669"/>
    <property type="project" value="UniProtKB-UniRule"/>
</dbReference>
<dbReference type="GO" id="GO:0032259">
    <property type="term" value="P:methylation"/>
    <property type="evidence" value="ECO:0007669"/>
    <property type="project" value="UniProtKB-KW"/>
</dbReference>
<dbReference type="CDD" id="cd00351">
    <property type="entry name" value="TS_Pyrimidine_HMase"/>
    <property type="match status" value="1"/>
</dbReference>
<dbReference type="FunFam" id="3.30.572.10:FF:000001">
    <property type="entry name" value="Thymidylate synthase"/>
    <property type="match status" value="1"/>
</dbReference>
<dbReference type="Gene3D" id="3.30.572.10">
    <property type="entry name" value="Thymidylate synthase/dCMP hydroxymethylase domain"/>
    <property type="match status" value="1"/>
</dbReference>
<dbReference type="HAMAP" id="MF_00008">
    <property type="entry name" value="Thymidy_synth_bact"/>
    <property type="match status" value="1"/>
</dbReference>
<dbReference type="InterPro" id="IPR045097">
    <property type="entry name" value="Thymidate_synth/dCMP_Mease"/>
</dbReference>
<dbReference type="InterPro" id="IPR023451">
    <property type="entry name" value="Thymidate_synth/dCMP_Mease_dom"/>
</dbReference>
<dbReference type="InterPro" id="IPR036926">
    <property type="entry name" value="Thymidate_synth/dCMP_Mease_sf"/>
</dbReference>
<dbReference type="InterPro" id="IPR000398">
    <property type="entry name" value="Thymidylate_synthase"/>
</dbReference>
<dbReference type="InterPro" id="IPR020940">
    <property type="entry name" value="Thymidylate_synthase_AS"/>
</dbReference>
<dbReference type="NCBIfam" id="NF002497">
    <property type="entry name" value="PRK01827.1-3"/>
    <property type="match status" value="1"/>
</dbReference>
<dbReference type="NCBIfam" id="NF002499">
    <property type="entry name" value="PRK01827.1-5"/>
    <property type="match status" value="1"/>
</dbReference>
<dbReference type="NCBIfam" id="TIGR03284">
    <property type="entry name" value="thym_sym"/>
    <property type="match status" value="2"/>
</dbReference>
<dbReference type="PANTHER" id="PTHR11548:SF9">
    <property type="entry name" value="THYMIDYLATE SYNTHASE"/>
    <property type="match status" value="1"/>
</dbReference>
<dbReference type="PANTHER" id="PTHR11548">
    <property type="entry name" value="THYMIDYLATE SYNTHASE 1"/>
    <property type="match status" value="1"/>
</dbReference>
<dbReference type="Pfam" id="PF00303">
    <property type="entry name" value="Thymidylat_synt"/>
    <property type="match status" value="1"/>
</dbReference>
<dbReference type="PRINTS" id="PR00108">
    <property type="entry name" value="THYMDSNTHASE"/>
</dbReference>
<dbReference type="SUPFAM" id="SSF55831">
    <property type="entry name" value="Thymidylate synthase/dCMP hydroxymethylase"/>
    <property type="match status" value="1"/>
</dbReference>
<dbReference type="PROSITE" id="PS00091">
    <property type="entry name" value="THYMIDYLATE_SYNTHASE"/>
    <property type="match status" value="1"/>
</dbReference>
<evidence type="ECO:0000255" key="1">
    <source>
        <dbReference type="HAMAP-Rule" id="MF_00008"/>
    </source>
</evidence>
<evidence type="ECO:0000305" key="2"/>
<comment type="function">
    <text evidence="1">Catalyzes the reductive methylation of 2'-deoxyuridine-5'-monophosphate (dUMP) to 2'-deoxythymidine-5'-monophosphate (dTMP) while utilizing 5,10-methylenetetrahydrofolate (mTHF) as the methyl donor and reductant in the reaction, yielding dihydrofolate (DHF) as a by-product. This enzymatic reaction provides an intracellular de novo source of dTMP, an essential precursor for DNA biosynthesis.</text>
</comment>
<comment type="catalytic activity">
    <reaction evidence="1">
        <text>dUMP + (6R)-5,10-methylene-5,6,7,8-tetrahydrofolate = 7,8-dihydrofolate + dTMP</text>
        <dbReference type="Rhea" id="RHEA:12104"/>
        <dbReference type="ChEBI" id="CHEBI:15636"/>
        <dbReference type="ChEBI" id="CHEBI:57451"/>
        <dbReference type="ChEBI" id="CHEBI:63528"/>
        <dbReference type="ChEBI" id="CHEBI:246422"/>
        <dbReference type="EC" id="2.1.1.45"/>
    </reaction>
</comment>
<comment type="pathway">
    <text evidence="1">Pyrimidine metabolism; dTTP biosynthesis.</text>
</comment>
<comment type="subunit">
    <text evidence="1">Homodimer.</text>
</comment>
<comment type="subcellular location">
    <subcellularLocation>
        <location evidence="1">Cytoplasm</location>
    </subcellularLocation>
</comment>
<comment type="similarity">
    <text evidence="1">Belongs to the thymidylate synthase family. Bacterial-type ThyA subfamily.</text>
</comment>
<comment type="sequence caution" evidence="2">
    <conflict type="erroneous initiation">
        <sequence resource="EMBL-CDS" id="AAC45469"/>
    </conflict>
</comment>
<protein>
    <recommendedName>
        <fullName evidence="1">Thymidylate synthase</fullName>
        <shortName evidence="1">TS</shortName>
        <shortName evidence="1">TSase</shortName>
        <ecNumber evidence="1">2.1.1.45</ecNumber>
    </recommendedName>
</protein>
<gene>
    <name evidence="1" type="primary">thyA</name>
</gene>
<organism>
    <name type="scientific">Neisseria gonorrhoeae</name>
    <dbReference type="NCBI Taxonomy" id="485"/>
    <lineage>
        <taxon>Bacteria</taxon>
        <taxon>Pseudomonadati</taxon>
        <taxon>Pseudomonadota</taxon>
        <taxon>Betaproteobacteria</taxon>
        <taxon>Neisseriales</taxon>
        <taxon>Neisseriaceae</taxon>
        <taxon>Neisseria</taxon>
    </lineage>
</organism>
<feature type="chain" id="PRO_0000140992" description="Thymidylate synthase">
    <location>
        <begin position="1"/>
        <end position="265"/>
    </location>
</feature>
<feature type="active site" description="Nucleophile" evidence="1">
    <location>
        <position position="147"/>
    </location>
</feature>
<feature type="binding site" description="in other chain" evidence="1">
    <location>
        <position position="21"/>
    </location>
    <ligand>
        <name>dUMP</name>
        <dbReference type="ChEBI" id="CHEBI:246422"/>
        <note>ligand shared between dimeric partners</note>
    </ligand>
</feature>
<feature type="binding site" evidence="1">
    <location>
        <position position="51"/>
    </location>
    <ligand>
        <name>(6R)-5,10-methylene-5,6,7,8-tetrahydrofolate</name>
        <dbReference type="ChEBI" id="CHEBI:15636"/>
    </ligand>
</feature>
<feature type="binding site" evidence="1">
    <location>
        <begin position="127"/>
        <end position="128"/>
    </location>
    <ligand>
        <name>dUMP</name>
        <dbReference type="ChEBI" id="CHEBI:246422"/>
        <note>ligand shared between dimeric partners</note>
    </ligand>
</feature>
<feature type="binding site" description="in other chain" evidence="1">
    <location>
        <begin position="167"/>
        <end position="170"/>
    </location>
    <ligand>
        <name>dUMP</name>
        <dbReference type="ChEBI" id="CHEBI:246422"/>
        <note>ligand shared between dimeric partners</note>
    </ligand>
</feature>
<feature type="binding site" evidence="1">
    <location>
        <position position="170"/>
    </location>
    <ligand>
        <name>(6R)-5,10-methylene-5,6,7,8-tetrahydrofolate</name>
        <dbReference type="ChEBI" id="CHEBI:15636"/>
    </ligand>
</feature>
<feature type="binding site" description="in other chain" evidence="1">
    <location>
        <position position="178"/>
    </location>
    <ligand>
        <name>dUMP</name>
        <dbReference type="ChEBI" id="CHEBI:246422"/>
        <note>ligand shared between dimeric partners</note>
    </ligand>
</feature>
<feature type="binding site" description="in other chain" evidence="1">
    <location>
        <begin position="208"/>
        <end position="210"/>
    </location>
    <ligand>
        <name>dUMP</name>
        <dbReference type="ChEBI" id="CHEBI:246422"/>
        <note>ligand shared between dimeric partners</note>
    </ligand>
</feature>
<feature type="binding site" evidence="1">
    <location>
        <position position="264"/>
    </location>
    <ligand>
        <name>(6R)-5,10-methylene-5,6,7,8-tetrahydrofolate</name>
        <dbReference type="ChEBI" id="CHEBI:15636"/>
    </ligand>
</feature>
<name>TYSY_NEIGO</name>
<keyword id="KW-0963">Cytoplasm</keyword>
<keyword id="KW-0489">Methyltransferase</keyword>
<keyword id="KW-0545">Nucleotide biosynthesis</keyword>
<keyword id="KW-0808">Transferase</keyword>
<accession>O33380</accession>
<proteinExistence type="inferred from homology"/>
<reference key="1">
    <citation type="journal article" date="1997" name="FEMS Microbiol. Lett.">
        <title>Identification and characterization of thymidylate synthase from Neisseria gonorrhoeae.</title>
        <authorList>
            <person name="Carlson J.H."/>
            <person name="Hill S.A."/>
        </authorList>
    </citation>
    <scope>NUCLEOTIDE SEQUENCE [GENOMIC DNA]</scope>
    <source>
        <strain>MS11</strain>
    </source>
</reference>
<sequence>MKAYLDLMRHVLDNGTDKSDRTGTGTLSVFGYQMRFDLGKGFPLLTTKKLHLRSIIHELLWFLKGDTNIKYLKDNNVSIWDDEWADENGDLGPVYGYQWRSWPAPDGRHIDQIANVVEQIKKNPDSRRLIVSAWNPALVDEMALPPCHALFQFYVADGNLSCQLYQRSADIFLGVPFNIASYALLTMMMAQVCGLEAGEFVHTFGDAHLYRNHFEQAALQLEREPRALPVMKINPEVKDLFAFKFEDFELEGYDPHPHIKAVVSV</sequence>